<organism>
    <name type="scientific">Syntrophobacter fumaroxidans (strain DSM 10017 / MPOB)</name>
    <dbReference type="NCBI Taxonomy" id="335543"/>
    <lineage>
        <taxon>Bacteria</taxon>
        <taxon>Pseudomonadati</taxon>
        <taxon>Thermodesulfobacteriota</taxon>
        <taxon>Syntrophobacteria</taxon>
        <taxon>Syntrophobacterales</taxon>
        <taxon>Syntrophobacteraceae</taxon>
        <taxon>Syntrophobacter</taxon>
    </lineage>
</organism>
<reference key="1">
    <citation type="submission" date="2006-10" db="EMBL/GenBank/DDBJ databases">
        <title>Complete sequence of Syntrophobacter fumaroxidans MPOB.</title>
        <authorList>
            <consortium name="US DOE Joint Genome Institute"/>
            <person name="Copeland A."/>
            <person name="Lucas S."/>
            <person name="Lapidus A."/>
            <person name="Barry K."/>
            <person name="Detter J.C."/>
            <person name="Glavina del Rio T."/>
            <person name="Hammon N."/>
            <person name="Israni S."/>
            <person name="Pitluck S."/>
            <person name="Goltsman E.G."/>
            <person name="Martinez M."/>
            <person name="Schmutz J."/>
            <person name="Larimer F."/>
            <person name="Land M."/>
            <person name="Hauser L."/>
            <person name="Kyrpides N."/>
            <person name="Kim E."/>
            <person name="Boone D.R."/>
            <person name="Brockman F."/>
            <person name="Culley D."/>
            <person name="Ferry J."/>
            <person name="Gunsalus R."/>
            <person name="McInerney M.J."/>
            <person name="Morrison M."/>
            <person name="Plugge C."/>
            <person name="Rohlin L."/>
            <person name="Scholten J."/>
            <person name="Sieber J."/>
            <person name="Stams A.J.M."/>
            <person name="Worm P."/>
            <person name="Henstra A.M."/>
            <person name="Richardson P."/>
        </authorList>
    </citation>
    <scope>NUCLEOTIDE SEQUENCE [LARGE SCALE GENOMIC DNA]</scope>
    <source>
        <strain>DSM 10017 / MPOB</strain>
    </source>
</reference>
<evidence type="ECO:0000255" key="1">
    <source>
        <dbReference type="HAMAP-Rule" id="MF_00446"/>
    </source>
</evidence>
<feature type="chain" id="PRO_0000307073" description="Aspartate 1-decarboxylase beta chain" evidence="1">
    <location>
        <begin position="1"/>
        <end position="24"/>
    </location>
</feature>
<feature type="chain" id="PRO_0000307074" description="Aspartate 1-decarboxylase alpha chain" evidence="1">
    <location>
        <begin position="25"/>
        <end position="124"/>
    </location>
</feature>
<feature type="active site" description="Schiff-base intermediate with substrate; via pyruvic acid" evidence="1">
    <location>
        <position position="25"/>
    </location>
</feature>
<feature type="active site" description="Proton donor" evidence="1">
    <location>
        <position position="58"/>
    </location>
</feature>
<feature type="binding site" evidence="1">
    <location>
        <position position="57"/>
    </location>
    <ligand>
        <name>substrate</name>
    </ligand>
</feature>
<feature type="binding site" evidence="1">
    <location>
        <begin position="73"/>
        <end position="75"/>
    </location>
    <ligand>
        <name>substrate</name>
    </ligand>
</feature>
<feature type="modified residue" description="Pyruvic acid (Ser)" evidence="1">
    <location>
        <position position="25"/>
    </location>
</feature>
<name>PAND_SYNFM</name>
<protein>
    <recommendedName>
        <fullName evidence="1">Aspartate 1-decarboxylase</fullName>
        <ecNumber evidence="1">4.1.1.11</ecNumber>
    </recommendedName>
    <alternativeName>
        <fullName evidence="1">Aspartate alpha-decarboxylase</fullName>
    </alternativeName>
    <component>
        <recommendedName>
            <fullName evidence="1">Aspartate 1-decarboxylase beta chain</fullName>
        </recommendedName>
    </component>
    <component>
        <recommendedName>
            <fullName evidence="1">Aspartate 1-decarboxylase alpha chain</fullName>
        </recommendedName>
    </component>
</protein>
<sequence>MQRLMLKSKIHRARVTEANLHYEGSLTIDETLMKAADILPYEQIKVYNVFNGARFDTYAIAGPAGSGVFCLNGAAARMGAAGDLIIIATYAQYDEAEIARHQPKVVLLDGDNRPLSQGLKACLS</sequence>
<keyword id="KW-0068">Autocatalytic cleavage</keyword>
<keyword id="KW-0963">Cytoplasm</keyword>
<keyword id="KW-0210">Decarboxylase</keyword>
<keyword id="KW-0456">Lyase</keyword>
<keyword id="KW-0566">Pantothenate biosynthesis</keyword>
<keyword id="KW-0670">Pyruvate</keyword>
<keyword id="KW-1185">Reference proteome</keyword>
<keyword id="KW-0704">Schiff base</keyword>
<keyword id="KW-0865">Zymogen</keyword>
<comment type="function">
    <text evidence="1">Catalyzes the pyruvoyl-dependent decarboxylation of aspartate to produce beta-alanine.</text>
</comment>
<comment type="catalytic activity">
    <reaction evidence="1">
        <text>L-aspartate + H(+) = beta-alanine + CO2</text>
        <dbReference type="Rhea" id="RHEA:19497"/>
        <dbReference type="ChEBI" id="CHEBI:15378"/>
        <dbReference type="ChEBI" id="CHEBI:16526"/>
        <dbReference type="ChEBI" id="CHEBI:29991"/>
        <dbReference type="ChEBI" id="CHEBI:57966"/>
        <dbReference type="EC" id="4.1.1.11"/>
    </reaction>
</comment>
<comment type="cofactor">
    <cofactor evidence="1">
        <name>pyruvate</name>
        <dbReference type="ChEBI" id="CHEBI:15361"/>
    </cofactor>
    <text evidence="1">Binds 1 pyruvoyl group covalently per subunit.</text>
</comment>
<comment type="pathway">
    <text evidence="1">Cofactor biosynthesis; (R)-pantothenate biosynthesis; beta-alanine from L-aspartate: step 1/1.</text>
</comment>
<comment type="subunit">
    <text evidence="1">Heterooctamer of four alpha and four beta subunits.</text>
</comment>
<comment type="subcellular location">
    <subcellularLocation>
        <location evidence="1">Cytoplasm</location>
    </subcellularLocation>
</comment>
<comment type="PTM">
    <text evidence="1">Is synthesized initially as an inactive proenzyme, which is activated by self-cleavage at a specific serine bond to produce a beta-subunit with a hydroxyl group at its C-terminus and an alpha-subunit with a pyruvoyl group at its N-terminus.</text>
</comment>
<comment type="similarity">
    <text evidence="1">Belongs to the PanD family.</text>
</comment>
<dbReference type="EC" id="4.1.1.11" evidence="1"/>
<dbReference type="EMBL" id="CP000478">
    <property type="protein sequence ID" value="ABK16068.1"/>
    <property type="molecule type" value="Genomic_DNA"/>
</dbReference>
<dbReference type="RefSeq" id="WP_011697241.1">
    <property type="nucleotide sequence ID" value="NC_008554.1"/>
</dbReference>
<dbReference type="SMR" id="A0LF66"/>
<dbReference type="FunCoup" id="A0LF66">
    <property type="interactions" value="348"/>
</dbReference>
<dbReference type="STRING" id="335543.Sfum_0368"/>
<dbReference type="KEGG" id="sfu:Sfum_0368"/>
<dbReference type="eggNOG" id="COG0853">
    <property type="taxonomic scope" value="Bacteria"/>
</dbReference>
<dbReference type="HOGENOM" id="CLU_115305_2_0_7"/>
<dbReference type="InParanoid" id="A0LF66"/>
<dbReference type="OrthoDB" id="9803983at2"/>
<dbReference type="UniPathway" id="UPA00028">
    <property type="reaction ID" value="UER00002"/>
</dbReference>
<dbReference type="Proteomes" id="UP000001784">
    <property type="component" value="Chromosome"/>
</dbReference>
<dbReference type="GO" id="GO:0005829">
    <property type="term" value="C:cytosol"/>
    <property type="evidence" value="ECO:0007669"/>
    <property type="project" value="TreeGrafter"/>
</dbReference>
<dbReference type="GO" id="GO:0004068">
    <property type="term" value="F:aspartate 1-decarboxylase activity"/>
    <property type="evidence" value="ECO:0007669"/>
    <property type="project" value="UniProtKB-UniRule"/>
</dbReference>
<dbReference type="GO" id="GO:0006523">
    <property type="term" value="P:alanine biosynthetic process"/>
    <property type="evidence" value="ECO:0007669"/>
    <property type="project" value="InterPro"/>
</dbReference>
<dbReference type="GO" id="GO:0015940">
    <property type="term" value="P:pantothenate biosynthetic process"/>
    <property type="evidence" value="ECO:0007669"/>
    <property type="project" value="UniProtKB-UniRule"/>
</dbReference>
<dbReference type="CDD" id="cd06919">
    <property type="entry name" value="Asp_decarbox"/>
    <property type="match status" value="1"/>
</dbReference>
<dbReference type="Gene3D" id="2.40.40.20">
    <property type="match status" value="1"/>
</dbReference>
<dbReference type="HAMAP" id="MF_00446">
    <property type="entry name" value="PanD"/>
    <property type="match status" value="1"/>
</dbReference>
<dbReference type="InterPro" id="IPR009010">
    <property type="entry name" value="Asp_de-COase-like_dom_sf"/>
</dbReference>
<dbReference type="InterPro" id="IPR003190">
    <property type="entry name" value="Asp_decarbox"/>
</dbReference>
<dbReference type="NCBIfam" id="TIGR00223">
    <property type="entry name" value="panD"/>
    <property type="match status" value="1"/>
</dbReference>
<dbReference type="PANTHER" id="PTHR21012">
    <property type="entry name" value="ASPARTATE 1-DECARBOXYLASE"/>
    <property type="match status" value="1"/>
</dbReference>
<dbReference type="PANTHER" id="PTHR21012:SF0">
    <property type="entry name" value="ASPARTATE 1-DECARBOXYLASE"/>
    <property type="match status" value="1"/>
</dbReference>
<dbReference type="Pfam" id="PF02261">
    <property type="entry name" value="Asp_decarbox"/>
    <property type="match status" value="1"/>
</dbReference>
<dbReference type="PIRSF" id="PIRSF006246">
    <property type="entry name" value="Asp_decarbox"/>
    <property type="match status" value="1"/>
</dbReference>
<dbReference type="SUPFAM" id="SSF50692">
    <property type="entry name" value="ADC-like"/>
    <property type="match status" value="1"/>
</dbReference>
<accession>A0LF66</accession>
<proteinExistence type="inferred from homology"/>
<gene>
    <name evidence="1" type="primary">panD</name>
    <name type="ordered locus">Sfum_0368</name>
</gene>